<accession>B0TZA4</accession>
<gene>
    <name evidence="1" type="primary">tig</name>
    <name type="ordered locus">Fphi_1531</name>
</gene>
<comment type="function">
    <text evidence="1">Involved in protein export. Acts as a chaperone by maintaining the newly synthesized protein in an open conformation. Functions as a peptidyl-prolyl cis-trans isomerase.</text>
</comment>
<comment type="catalytic activity">
    <reaction evidence="1">
        <text>[protein]-peptidylproline (omega=180) = [protein]-peptidylproline (omega=0)</text>
        <dbReference type="Rhea" id="RHEA:16237"/>
        <dbReference type="Rhea" id="RHEA-COMP:10747"/>
        <dbReference type="Rhea" id="RHEA-COMP:10748"/>
        <dbReference type="ChEBI" id="CHEBI:83833"/>
        <dbReference type="ChEBI" id="CHEBI:83834"/>
        <dbReference type="EC" id="5.2.1.8"/>
    </reaction>
</comment>
<comment type="subcellular location">
    <subcellularLocation>
        <location>Cytoplasm</location>
    </subcellularLocation>
    <text evidence="1">About half TF is bound to the ribosome near the polypeptide exit tunnel while the other half is free in the cytoplasm.</text>
</comment>
<comment type="domain">
    <text evidence="1">Consists of 3 domains; the N-terminus binds the ribosome, the middle domain has PPIase activity, while the C-terminus has intrinsic chaperone activity on its own.</text>
</comment>
<comment type="similarity">
    <text evidence="1">Belongs to the FKBP-type PPIase family. Tig subfamily.</text>
</comment>
<dbReference type="EC" id="5.2.1.8" evidence="1"/>
<dbReference type="EMBL" id="CP000937">
    <property type="protein sequence ID" value="ABZ87757.1"/>
    <property type="molecule type" value="Genomic_DNA"/>
</dbReference>
<dbReference type="SMR" id="B0TZA4"/>
<dbReference type="KEGG" id="fph:Fphi_1531"/>
<dbReference type="eggNOG" id="COG0544">
    <property type="taxonomic scope" value="Bacteria"/>
</dbReference>
<dbReference type="HOGENOM" id="CLU_033058_2_0_6"/>
<dbReference type="GO" id="GO:0005737">
    <property type="term" value="C:cytoplasm"/>
    <property type="evidence" value="ECO:0007669"/>
    <property type="project" value="UniProtKB-SubCell"/>
</dbReference>
<dbReference type="GO" id="GO:0003755">
    <property type="term" value="F:peptidyl-prolyl cis-trans isomerase activity"/>
    <property type="evidence" value="ECO:0007669"/>
    <property type="project" value="UniProtKB-UniRule"/>
</dbReference>
<dbReference type="GO" id="GO:0044183">
    <property type="term" value="F:protein folding chaperone"/>
    <property type="evidence" value="ECO:0007669"/>
    <property type="project" value="TreeGrafter"/>
</dbReference>
<dbReference type="GO" id="GO:0043022">
    <property type="term" value="F:ribosome binding"/>
    <property type="evidence" value="ECO:0007669"/>
    <property type="project" value="TreeGrafter"/>
</dbReference>
<dbReference type="GO" id="GO:0051083">
    <property type="term" value="P:'de novo' cotranslational protein folding"/>
    <property type="evidence" value="ECO:0007669"/>
    <property type="project" value="TreeGrafter"/>
</dbReference>
<dbReference type="GO" id="GO:0051301">
    <property type="term" value="P:cell division"/>
    <property type="evidence" value="ECO:0007669"/>
    <property type="project" value="UniProtKB-KW"/>
</dbReference>
<dbReference type="GO" id="GO:0061077">
    <property type="term" value="P:chaperone-mediated protein folding"/>
    <property type="evidence" value="ECO:0007669"/>
    <property type="project" value="TreeGrafter"/>
</dbReference>
<dbReference type="GO" id="GO:0015031">
    <property type="term" value="P:protein transport"/>
    <property type="evidence" value="ECO:0007669"/>
    <property type="project" value="UniProtKB-UniRule"/>
</dbReference>
<dbReference type="GO" id="GO:0043335">
    <property type="term" value="P:protein unfolding"/>
    <property type="evidence" value="ECO:0007669"/>
    <property type="project" value="TreeGrafter"/>
</dbReference>
<dbReference type="FunFam" id="3.10.50.40:FF:000001">
    <property type="entry name" value="Trigger factor"/>
    <property type="match status" value="1"/>
</dbReference>
<dbReference type="Gene3D" id="3.10.50.40">
    <property type="match status" value="1"/>
</dbReference>
<dbReference type="Gene3D" id="3.30.70.1050">
    <property type="entry name" value="Trigger factor ribosome-binding domain"/>
    <property type="match status" value="1"/>
</dbReference>
<dbReference type="Gene3D" id="1.10.3120.10">
    <property type="entry name" value="Trigger factor, C-terminal domain"/>
    <property type="match status" value="1"/>
</dbReference>
<dbReference type="HAMAP" id="MF_00303">
    <property type="entry name" value="Trigger_factor_Tig"/>
    <property type="match status" value="1"/>
</dbReference>
<dbReference type="InterPro" id="IPR046357">
    <property type="entry name" value="PPIase_dom_sf"/>
</dbReference>
<dbReference type="InterPro" id="IPR001179">
    <property type="entry name" value="PPIase_FKBP_dom"/>
</dbReference>
<dbReference type="InterPro" id="IPR005215">
    <property type="entry name" value="Trig_fac"/>
</dbReference>
<dbReference type="InterPro" id="IPR008880">
    <property type="entry name" value="Trigger_fac_C"/>
</dbReference>
<dbReference type="InterPro" id="IPR037041">
    <property type="entry name" value="Trigger_fac_C_sf"/>
</dbReference>
<dbReference type="InterPro" id="IPR008881">
    <property type="entry name" value="Trigger_fac_ribosome-bd_bac"/>
</dbReference>
<dbReference type="InterPro" id="IPR036611">
    <property type="entry name" value="Trigger_fac_ribosome-bd_sf"/>
</dbReference>
<dbReference type="InterPro" id="IPR027304">
    <property type="entry name" value="Trigger_fact/SurA_dom_sf"/>
</dbReference>
<dbReference type="NCBIfam" id="TIGR00115">
    <property type="entry name" value="tig"/>
    <property type="match status" value="1"/>
</dbReference>
<dbReference type="PANTHER" id="PTHR30560">
    <property type="entry name" value="TRIGGER FACTOR CHAPERONE AND PEPTIDYL-PROLYL CIS/TRANS ISOMERASE"/>
    <property type="match status" value="1"/>
</dbReference>
<dbReference type="PANTHER" id="PTHR30560:SF3">
    <property type="entry name" value="TRIGGER FACTOR-LIKE PROTEIN TIG, CHLOROPLASTIC"/>
    <property type="match status" value="1"/>
</dbReference>
<dbReference type="Pfam" id="PF00254">
    <property type="entry name" value="FKBP_C"/>
    <property type="match status" value="1"/>
</dbReference>
<dbReference type="Pfam" id="PF05698">
    <property type="entry name" value="Trigger_C"/>
    <property type="match status" value="1"/>
</dbReference>
<dbReference type="Pfam" id="PF05697">
    <property type="entry name" value="Trigger_N"/>
    <property type="match status" value="1"/>
</dbReference>
<dbReference type="PIRSF" id="PIRSF003095">
    <property type="entry name" value="Trigger_factor"/>
    <property type="match status" value="1"/>
</dbReference>
<dbReference type="SUPFAM" id="SSF54534">
    <property type="entry name" value="FKBP-like"/>
    <property type="match status" value="1"/>
</dbReference>
<dbReference type="SUPFAM" id="SSF109998">
    <property type="entry name" value="Triger factor/SurA peptide-binding domain-like"/>
    <property type="match status" value="1"/>
</dbReference>
<dbReference type="SUPFAM" id="SSF102735">
    <property type="entry name" value="Trigger factor ribosome-binding domain"/>
    <property type="match status" value="1"/>
</dbReference>
<dbReference type="PROSITE" id="PS50059">
    <property type="entry name" value="FKBP_PPIASE"/>
    <property type="match status" value="1"/>
</dbReference>
<protein>
    <recommendedName>
        <fullName evidence="1">Trigger factor</fullName>
        <shortName evidence="1">TF</shortName>
        <ecNumber evidence="1">5.2.1.8</ecNumber>
    </recommendedName>
    <alternativeName>
        <fullName evidence="1">PPIase</fullName>
    </alternativeName>
</protein>
<name>TIG_FRAP2</name>
<organism>
    <name type="scientific">Francisella philomiragia subsp. philomiragia (strain ATCC 25017 / CCUG 19701 / FSC 153 / O#319-036)</name>
    <dbReference type="NCBI Taxonomy" id="484022"/>
    <lineage>
        <taxon>Bacteria</taxon>
        <taxon>Pseudomonadati</taxon>
        <taxon>Pseudomonadota</taxon>
        <taxon>Gammaproteobacteria</taxon>
        <taxon>Thiotrichales</taxon>
        <taxon>Francisellaceae</taxon>
        <taxon>Francisella</taxon>
    </lineage>
</organism>
<evidence type="ECO:0000255" key="1">
    <source>
        <dbReference type="HAMAP-Rule" id="MF_00303"/>
    </source>
</evidence>
<feature type="chain" id="PRO_1000079040" description="Trigger factor">
    <location>
        <begin position="1"/>
        <end position="438"/>
    </location>
</feature>
<feature type="domain" description="PPIase FKBP-type" evidence="1">
    <location>
        <begin position="160"/>
        <end position="245"/>
    </location>
</feature>
<keyword id="KW-0131">Cell cycle</keyword>
<keyword id="KW-0132">Cell division</keyword>
<keyword id="KW-0143">Chaperone</keyword>
<keyword id="KW-0963">Cytoplasm</keyword>
<keyword id="KW-0413">Isomerase</keyword>
<keyword id="KW-0697">Rotamase</keyword>
<proteinExistence type="inferred from homology"/>
<reference key="1">
    <citation type="submission" date="2007-12" db="EMBL/GenBank/DDBJ databases">
        <title>Complete sequence of chromosome of Francisella philomiragia subsp. philomiragia ATCC 25017.</title>
        <authorList>
            <consortium name="US DOE Joint Genome Institute"/>
            <person name="Copeland A."/>
            <person name="Lucas S."/>
            <person name="Lapidus A."/>
            <person name="Barry K."/>
            <person name="Detter J.C."/>
            <person name="Glavina del Rio T."/>
            <person name="Hammon N."/>
            <person name="Israni S."/>
            <person name="Dalin E."/>
            <person name="Tice H."/>
            <person name="Pitluck S."/>
            <person name="Chain P."/>
            <person name="Malfatti S."/>
            <person name="Shin M."/>
            <person name="Vergez L."/>
            <person name="Schmutz J."/>
            <person name="Larimer F."/>
            <person name="Land M."/>
            <person name="Hauser L."/>
            <person name="Richardson P."/>
        </authorList>
    </citation>
    <scope>NUCLEOTIDE SEQUENCE [LARGE SCALE GENOMIC DNA]</scope>
    <source>
        <strain>ATCC 25017 / CCUG 19701 / FSC 153 / O#319-036</strain>
    </source>
</reference>
<sequence>MQVTVEKKEGIHCSLLIEVPANEVDSIVTKEINKTAKTIKMDGFRPGKVPAGMVEKKYGEQIRMEVISDLIPQKYSKAIQDEKLAVAGIEVELKENKKGEPLKFVANLELFPEFEVTGFEKIEVQKPVVELTDKEVKQMIENLRKQLATFSEVERAVQKDDKVVIDFVGKRDGEVFEGGSANDQELVIGSGQMIPGFEDGIIGMNKDEQRTITVTFPEDYQNKDLAGKEATFDITVKKIQEAQLPEVDDEFVAKFGVKGGVDTFEDEIKENMQRELKFILQRKVKDQVFKGLREIAEFETPKALIKREIDAAKQNLVKQMGGGQNFDVNQLPDNLFEANAKQKVETSLILDSIIESQKFQAEDAEVESLLDELVQAYEEPEKTKEQIKKNDREISNLKGLVIENKLTDWVLSQAQVTEKQEDFFEVIKENMQAQQAGF</sequence>